<sequence>MTFSDLLTKLQDNLDIVFNANALKERIQSDPAFAKTIREQLKLLYFLEQKQAKAKTKKKDFQPVFQNLEARFVSLGQTKLANTELNLKLDLTDATDLANYLPIAVCNLFNRDLNSFSKLSSVQPTAVEKTTNGANKPTVTIDLNQPRIHTTGTVSPELENFVNESLEARARQRAFMRVTSERMVGKIFEFQFKSQWIKWAQLAIFISMLLIGAAAIAYLVVVNLLFYRYVNPDSNLTKAVTGQNNTDRPALVDLNGGINLFFPVSASTLITLIFLGFGSTSFLLAFQGKPYSFATRSQTFKAMHFLKHQFGVTDFPRINDNYRYKVRIKWIFWTIFLFVALNALPGGNIITGGILNPSFLLNALRSNELKINSETFKTIFVGFSIFYLASIIPFALISIIAFVLSPKPSSDQTNEVLNRYVQEEMQQPFKTDCDPNNDNDLTPPAVFG</sequence>
<accession>Q50363</accession>
<accession>P75331</accession>
<proteinExistence type="predicted"/>
<organism>
    <name type="scientific">Mycoplasma pneumoniae (strain ATCC 29342 / M129 / Subtype 1)</name>
    <name type="common">Mycoplasmoides pneumoniae</name>
    <dbReference type="NCBI Taxonomy" id="272634"/>
    <lineage>
        <taxon>Bacteria</taxon>
        <taxon>Bacillati</taxon>
        <taxon>Mycoplasmatota</taxon>
        <taxon>Mycoplasmoidales</taxon>
        <taxon>Mycoplasmoidaceae</taxon>
        <taxon>Mycoplasmoides</taxon>
    </lineage>
</organism>
<feature type="chain" id="PRO_0000210529" description="Uncharacterized protein MG314 homolog">
    <location>
        <begin position="1"/>
        <end position="448"/>
    </location>
</feature>
<feature type="region of interest" description="Disordered" evidence="1">
    <location>
        <begin position="428"/>
        <end position="448"/>
    </location>
</feature>
<feature type="compositionally biased region" description="Polar residues" evidence="1">
    <location>
        <begin position="428"/>
        <end position="440"/>
    </location>
</feature>
<feature type="sequence conflict" description="In Ref. 1; AAA61695." evidence="2" ref="1">
    <original>R</original>
    <variation>P</variation>
    <location>
        <position position="169"/>
    </location>
</feature>
<dbReference type="EMBL" id="L38997">
    <property type="protein sequence ID" value="AAA61695.1"/>
    <property type="molecule type" value="Genomic_DNA"/>
</dbReference>
<dbReference type="EMBL" id="U00089">
    <property type="protein sequence ID" value="AAB96040.1"/>
    <property type="molecule type" value="Genomic_DNA"/>
</dbReference>
<dbReference type="PIR" id="S73718">
    <property type="entry name" value="S73718"/>
</dbReference>
<dbReference type="RefSeq" id="NP_110137.1">
    <property type="nucleotide sequence ID" value="NC_000912.1"/>
</dbReference>
<dbReference type="RefSeq" id="WP_010874805.1">
    <property type="nucleotide sequence ID" value="NC_000912.1"/>
</dbReference>
<dbReference type="SMR" id="Q50363"/>
<dbReference type="STRING" id="272634.MPN_449"/>
<dbReference type="EnsemblBacteria" id="AAB96040">
    <property type="protein sequence ID" value="AAB96040"/>
    <property type="gene ID" value="MPN_449"/>
</dbReference>
<dbReference type="KEGG" id="mpn:MPN_449"/>
<dbReference type="PATRIC" id="fig|272634.6.peg.485"/>
<dbReference type="HOGENOM" id="CLU_617935_0_0_14"/>
<dbReference type="OrthoDB" id="399084at2"/>
<dbReference type="BioCyc" id="MPNE272634:G1GJ3-726-MONOMER"/>
<dbReference type="Proteomes" id="UP000000808">
    <property type="component" value="Chromosome"/>
</dbReference>
<dbReference type="NCBIfam" id="NF045753">
    <property type="entry name" value="MPN449"/>
    <property type="match status" value="1"/>
</dbReference>
<protein>
    <recommendedName>
        <fullName>Uncharacterized protein MG314 homolog</fullName>
    </recommendedName>
</protein>
<keyword id="KW-1185">Reference proteome</keyword>
<reference key="1">
    <citation type="journal article" date="1996" name="Gene">
        <title>Sequence analysis and characterization of the hmw gene cluster of Mycoplasma pneumoniae.</title>
        <authorList>
            <person name="Dirksen L.B."/>
            <person name="Proft T."/>
            <person name="Hilbert H."/>
            <person name="Plagens H."/>
            <person name="Herrmann R."/>
            <person name="Krause D.C."/>
        </authorList>
    </citation>
    <scope>NUCLEOTIDE SEQUENCE [GENOMIC DNA]</scope>
    <source>
        <strain>ATCC 29342 / M129 / Subtype 1</strain>
    </source>
</reference>
<reference key="2">
    <citation type="journal article" date="1996" name="Nucleic Acids Res.">
        <title>Complete sequence analysis of the genome of the bacterium Mycoplasma pneumoniae.</title>
        <authorList>
            <person name="Himmelreich R."/>
            <person name="Hilbert H."/>
            <person name="Plagens H."/>
            <person name="Pirkl E."/>
            <person name="Li B.-C."/>
            <person name="Herrmann R."/>
        </authorList>
    </citation>
    <scope>NUCLEOTIDE SEQUENCE [LARGE SCALE GENOMIC DNA]</scope>
    <source>
        <strain>ATCC 29342 / M129 / Subtype 1</strain>
    </source>
</reference>
<gene>
    <name type="ordered locus">MPN_449</name>
    <name type="ORF">H08_orf448</name>
    <name type="ORF">MP392</name>
</gene>
<evidence type="ECO:0000256" key="1">
    <source>
        <dbReference type="SAM" id="MobiDB-lite"/>
    </source>
</evidence>
<evidence type="ECO:0000305" key="2"/>
<name>Y449_MYCPN</name>